<accession>O74457</accession>
<evidence type="ECO:0000250" key="1">
    <source>
        <dbReference type="UniProtKB" id="Q06504"/>
    </source>
</evidence>
<evidence type="ECO:0000255" key="2">
    <source>
        <dbReference type="PROSITE-ProRule" id="PRU00532"/>
    </source>
</evidence>
<evidence type="ECO:0000269" key="3">
    <source>
    </source>
</evidence>
<evidence type="ECO:0000305" key="4"/>
<sequence>MTDTRKFKATDLFSFNNINLDPLTETFNISFYLSYLNKWPSLCVVQESDLSDPTLMGYIMGKSEGTGKEWHTHVTAITVAPNSRRLGLARTMMDYLETVGNSENAFFVDLFVRASNALAIDFYKGLGYSVYRRVIGYYSNPHGKDEDSFDMRKPLSRDVNRESIRENGENFKCSPADVSF</sequence>
<gene>
    <name type="primary">naa20</name>
    <name type="synonym">nat3</name>
    <name type="ORF">SPCC16C4.12</name>
</gene>
<name>NAT3_SCHPO</name>
<organism>
    <name type="scientific">Schizosaccharomyces pombe (strain 972 / ATCC 24843)</name>
    <name type="common">Fission yeast</name>
    <dbReference type="NCBI Taxonomy" id="284812"/>
    <lineage>
        <taxon>Eukaryota</taxon>
        <taxon>Fungi</taxon>
        <taxon>Dikarya</taxon>
        <taxon>Ascomycota</taxon>
        <taxon>Taphrinomycotina</taxon>
        <taxon>Schizosaccharomycetes</taxon>
        <taxon>Schizosaccharomycetales</taxon>
        <taxon>Schizosaccharomycetaceae</taxon>
        <taxon>Schizosaccharomyces</taxon>
    </lineage>
</organism>
<feature type="chain" id="PRO_0000310295" description="N-terminal acetyltransferase B complex catalytic subunit naa20">
    <location>
        <begin position="1"/>
        <end position="180"/>
    </location>
</feature>
<feature type="domain" description="N-acetyltransferase" evidence="2">
    <location>
        <begin position="2"/>
        <end position="156"/>
    </location>
</feature>
<keyword id="KW-0012">Acyltransferase</keyword>
<keyword id="KW-0963">Cytoplasm</keyword>
<keyword id="KW-0539">Nucleus</keyword>
<keyword id="KW-1185">Reference proteome</keyword>
<keyword id="KW-0808">Transferase</keyword>
<dbReference type="EC" id="2.3.1.254" evidence="1"/>
<dbReference type="EMBL" id="CU329672">
    <property type="protein sequence ID" value="CAA20751.1"/>
    <property type="molecule type" value="Genomic_DNA"/>
</dbReference>
<dbReference type="PIR" id="T41102">
    <property type="entry name" value="T41102"/>
</dbReference>
<dbReference type="RefSeq" id="NP_587922.1">
    <property type="nucleotide sequence ID" value="NM_001022913.2"/>
</dbReference>
<dbReference type="SMR" id="O74457"/>
<dbReference type="FunCoup" id="O74457">
    <property type="interactions" value="435"/>
</dbReference>
<dbReference type="STRING" id="284812.O74457"/>
<dbReference type="PaxDb" id="4896-SPCC16C4.12.1"/>
<dbReference type="EnsemblFungi" id="SPCC16C4.12.1">
    <property type="protein sequence ID" value="SPCC16C4.12.1:pep"/>
    <property type="gene ID" value="SPCC16C4.12"/>
</dbReference>
<dbReference type="GeneID" id="2539279"/>
<dbReference type="KEGG" id="spo:2539279"/>
<dbReference type="PomBase" id="SPCC16C4.12">
    <property type="gene designation" value="naa20"/>
</dbReference>
<dbReference type="VEuPathDB" id="FungiDB:SPCC16C4.12"/>
<dbReference type="eggNOG" id="KOG3234">
    <property type="taxonomic scope" value="Eukaryota"/>
</dbReference>
<dbReference type="HOGENOM" id="CLU_013985_7_1_1"/>
<dbReference type="InParanoid" id="O74457"/>
<dbReference type="OMA" id="EQHPSMR"/>
<dbReference type="PhylomeDB" id="O74457"/>
<dbReference type="PRO" id="PR:O74457"/>
<dbReference type="Proteomes" id="UP000002485">
    <property type="component" value="Chromosome III"/>
</dbReference>
<dbReference type="GO" id="GO:0005829">
    <property type="term" value="C:cytosol"/>
    <property type="evidence" value="ECO:0007005"/>
    <property type="project" value="PomBase"/>
</dbReference>
<dbReference type="GO" id="GO:0031416">
    <property type="term" value="C:NatB complex"/>
    <property type="evidence" value="ECO:0000318"/>
    <property type="project" value="GO_Central"/>
</dbReference>
<dbReference type="GO" id="GO:0005634">
    <property type="term" value="C:nucleus"/>
    <property type="evidence" value="ECO:0007005"/>
    <property type="project" value="PomBase"/>
</dbReference>
<dbReference type="GO" id="GO:0120518">
    <property type="term" value="F:protein N-terminal-methionine acetyltransferase activity"/>
    <property type="evidence" value="ECO:0007669"/>
    <property type="project" value="UniProtKB-EC"/>
</dbReference>
<dbReference type="GO" id="GO:0004596">
    <property type="term" value="F:protein-N-terminal amino-acid acetyltransferase activity"/>
    <property type="evidence" value="ECO:0000318"/>
    <property type="project" value="GO_Central"/>
</dbReference>
<dbReference type="GO" id="GO:0051604">
    <property type="term" value="P:protein maturation"/>
    <property type="evidence" value="ECO:0000303"/>
    <property type="project" value="PomBase"/>
</dbReference>
<dbReference type="GO" id="GO:0032956">
    <property type="term" value="P:regulation of actin cytoskeleton organization"/>
    <property type="evidence" value="ECO:0000318"/>
    <property type="project" value="GO_Central"/>
</dbReference>
<dbReference type="CDD" id="cd04301">
    <property type="entry name" value="NAT_SF"/>
    <property type="match status" value="1"/>
</dbReference>
<dbReference type="Gene3D" id="3.40.630.30">
    <property type="match status" value="1"/>
</dbReference>
<dbReference type="InterPro" id="IPR016181">
    <property type="entry name" value="Acyl_CoA_acyltransferase"/>
</dbReference>
<dbReference type="InterPro" id="IPR000182">
    <property type="entry name" value="GNAT_dom"/>
</dbReference>
<dbReference type="InterPro" id="IPR051646">
    <property type="entry name" value="NatB_acetyltransferase_subunit"/>
</dbReference>
<dbReference type="PANTHER" id="PTHR45910">
    <property type="entry name" value="N-ALPHA-ACETYLTRANSFERASE 20"/>
    <property type="match status" value="1"/>
</dbReference>
<dbReference type="PANTHER" id="PTHR45910:SF1">
    <property type="entry name" value="N-ALPHA-ACETYLTRANSFERASE 20"/>
    <property type="match status" value="1"/>
</dbReference>
<dbReference type="Pfam" id="PF00583">
    <property type="entry name" value="Acetyltransf_1"/>
    <property type="match status" value="1"/>
</dbReference>
<dbReference type="SUPFAM" id="SSF55729">
    <property type="entry name" value="Acyl-CoA N-acyltransferases (Nat)"/>
    <property type="match status" value="1"/>
</dbReference>
<dbReference type="PROSITE" id="PS51186">
    <property type="entry name" value="GNAT"/>
    <property type="match status" value="1"/>
</dbReference>
<reference key="1">
    <citation type="journal article" date="2002" name="Nature">
        <title>The genome sequence of Schizosaccharomyces pombe.</title>
        <authorList>
            <person name="Wood V."/>
            <person name="Gwilliam R."/>
            <person name="Rajandream M.A."/>
            <person name="Lyne M.H."/>
            <person name="Lyne R."/>
            <person name="Stewart A."/>
            <person name="Sgouros J.G."/>
            <person name="Peat N."/>
            <person name="Hayles J."/>
            <person name="Baker S.G."/>
            <person name="Basham D."/>
            <person name="Bowman S."/>
            <person name="Brooks K."/>
            <person name="Brown D."/>
            <person name="Brown S."/>
            <person name="Chillingworth T."/>
            <person name="Churcher C.M."/>
            <person name="Collins M."/>
            <person name="Connor R."/>
            <person name="Cronin A."/>
            <person name="Davis P."/>
            <person name="Feltwell T."/>
            <person name="Fraser A."/>
            <person name="Gentles S."/>
            <person name="Goble A."/>
            <person name="Hamlin N."/>
            <person name="Harris D.E."/>
            <person name="Hidalgo J."/>
            <person name="Hodgson G."/>
            <person name="Holroyd S."/>
            <person name="Hornsby T."/>
            <person name="Howarth S."/>
            <person name="Huckle E.J."/>
            <person name="Hunt S."/>
            <person name="Jagels K."/>
            <person name="James K.D."/>
            <person name="Jones L."/>
            <person name="Jones M."/>
            <person name="Leather S."/>
            <person name="McDonald S."/>
            <person name="McLean J."/>
            <person name="Mooney P."/>
            <person name="Moule S."/>
            <person name="Mungall K.L."/>
            <person name="Murphy L.D."/>
            <person name="Niblett D."/>
            <person name="Odell C."/>
            <person name="Oliver K."/>
            <person name="O'Neil S."/>
            <person name="Pearson D."/>
            <person name="Quail M.A."/>
            <person name="Rabbinowitsch E."/>
            <person name="Rutherford K.M."/>
            <person name="Rutter S."/>
            <person name="Saunders D."/>
            <person name="Seeger K."/>
            <person name="Sharp S."/>
            <person name="Skelton J."/>
            <person name="Simmonds M.N."/>
            <person name="Squares R."/>
            <person name="Squares S."/>
            <person name="Stevens K."/>
            <person name="Taylor K."/>
            <person name="Taylor R.G."/>
            <person name="Tivey A."/>
            <person name="Walsh S.V."/>
            <person name="Warren T."/>
            <person name="Whitehead S."/>
            <person name="Woodward J.R."/>
            <person name="Volckaert G."/>
            <person name="Aert R."/>
            <person name="Robben J."/>
            <person name="Grymonprez B."/>
            <person name="Weltjens I."/>
            <person name="Vanstreels E."/>
            <person name="Rieger M."/>
            <person name="Schaefer M."/>
            <person name="Mueller-Auer S."/>
            <person name="Gabel C."/>
            <person name="Fuchs M."/>
            <person name="Duesterhoeft A."/>
            <person name="Fritzc C."/>
            <person name="Holzer E."/>
            <person name="Moestl D."/>
            <person name="Hilbert H."/>
            <person name="Borzym K."/>
            <person name="Langer I."/>
            <person name="Beck A."/>
            <person name="Lehrach H."/>
            <person name="Reinhardt R."/>
            <person name="Pohl T.M."/>
            <person name="Eger P."/>
            <person name="Zimmermann W."/>
            <person name="Wedler H."/>
            <person name="Wambutt R."/>
            <person name="Purnelle B."/>
            <person name="Goffeau A."/>
            <person name="Cadieu E."/>
            <person name="Dreano S."/>
            <person name="Gloux S."/>
            <person name="Lelaure V."/>
            <person name="Mottier S."/>
            <person name="Galibert F."/>
            <person name="Aves S.J."/>
            <person name="Xiang Z."/>
            <person name="Hunt C."/>
            <person name="Moore K."/>
            <person name="Hurst S.M."/>
            <person name="Lucas M."/>
            <person name="Rochet M."/>
            <person name="Gaillardin C."/>
            <person name="Tallada V.A."/>
            <person name="Garzon A."/>
            <person name="Thode G."/>
            <person name="Daga R.R."/>
            <person name="Cruzado L."/>
            <person name="Jimenez J."/>
            <person name="Sanchez M."/>
            <person name="del Rey F."/>
            <person name="Benito J."/>
            <person name="Dominguez A."/>
            <person name="Revuelta J.L."/>
            <person name="Moreno S."/>
            <person name="Armstrong J."/>
            <person name="Forsburg S.L."/>
            <person name="Cerutti L."/>
            <person name="Lowe T."/>
            <person name="McCombie W.R."/>
            <person name="Paulsen I."/>
            <person name="Potashkin J."/>
            <person name="Shpakovski G.V."/>
            <person name="Ussery D."/>
            <person name="Barrell B.G."/>
            <person name="Nurse P."/>
        </authorList>
    </citation>
    <scope>NUCLEOTIDE SEQUENCE [LARGE SCALE GENOMIC DNA]</scope>
    <source>
        <strain>972 / ATCC 24843</strain>
    </source>
</reference>
<reference key="2">
    <citation type="journal article" date="2006" name="Nat. Biotechnol.">
        <title>ORFeome cloning and global analysis of protein localization in the fission yeast Schizosaccharomyces pombe.</title>
        <authorList>
            <person name="Matsuyama A."/>
            <person name="Arai R."/>
            <person name="Yashiroda Y."/>
            <person name="Shirai A."/>
            <person name="Kamata A."/>
            <person name="Sekido S."/>
            <person name="Kobayashi Y."/>
            <person name="Hashimoto A."/>
            <person name="Hamamoto M."/>
            <person name="Hiraoka Y."/>
            <person name="Horinouchi S."/>
            <person name="Yoshida M."/>
        </authorList>
    </citation>
    <scope>SUBCELLULAR LOCATION [LARGE SCALE ANALYSIS]</scope>
</reference>
<protein>
    <recommendedName>
        <fullName>N-terminal acetyltransferase B complex catalytic subunit naa20</fullName>
        <shortName>NatB complex subunit naa20</shortName>
        <ecNumber evidence="1">2.3.1.254</ecNumber>
    </recommendedName>
    <alternativeName>
        <fullName>NatB Nalpha terminal acetyltransferase 3</fullName>
    </alternativeName>
</protein>
<proteinExistence type="inferred from homology"/>
<comment type="function">
    <text evidence="1">Catalytic subunit of the NatB N-terminal acetyltransferase, which catalyzes acetylation of the amino-terminal methionine residues of all proteins beginning with Met-Asp or Met-Glu and of some proteins beginning with Met-Asn, Met-Gln or Met-Met.</text>
</comment>
<comment type="catalytic activity">
    <reaction evidence="1">
        <text>N-terminal L-methionyl-L-asparaginyl-[protein] + acetyl-CoA = N-terminal N(alpha)-acetyl-L-methionyl-L-asparaginyl-[protein] + CoA + H(+)</text>
        <dbReference type="Rhea" id="RHEA:50484"/>
        <dbReference type="Rhea" id="RHEA-COMP:12694"/>
        <dbReference type="Rhea" id="RHEA-COMP:12695"/>
        <dbReference type="ChEBI" id="CHEBI:15378"/>
        <dbReference type="ChEBI" id="CHEBI:57287"/>
        <dbReference type="ChEBI" id="CHEBI:57288"/>
        <dbReference type="ChEBI" id="CHEBI:133356"/>
        <dbReference type="ChEBI" id="CHEBI:133358"/>
        <dbReference type="EC" id="2.3.1.254"/>
    </reaction>
</comment>
<comment type="catalytic activity">
    <reaction evidence="1">
        <text>N-terminal L-methionyl-L-glutaminyl-[protein] + acetyl-CoA = N-terminal N(alpha)-acetyl-L-methionyl-L-glutaminyl-[protein] + CoA + H(+)</text>
        <dbReference type="Rhea" id="RHEA:50492"/>
        <dbReference type="Rhea" id="RHEA-COMP:12698"/>
        <dbReference type="Rhea" id="RHEA-COMP:12699"/>
        <dbReference type="ChEBI" id="CHEBI:15378"/>
        <dbReference type="ChEBI" id="CHEBI:57287"/>
        <dbReference type="ChEBI" id="CHEBI:57288"/>
        <dbReference type="ChEBI" id="CHEBI:133361"/>
        <dbReference type="ChEBI" id="CHEBI:133362"/>
        <dbReference type="EC" id="2.3.1.254"/>
    </reaction>
</comment>
<comment type="catalytic activity">
    <reaction evidence="1">
        <text>N-terminal L-methionyl-L-aspartyl-[protein] + acetyl-CoA = N-terminal N(alpha)-acetyl-L-methionyl-L-aspartyl-[protein] + CoA + H(+)</text>
        <dbReference type="Rhea" id="RHEA:50480"/>
        <dbReference type="Rhea" id="RHEA-COMP:12692"/>
        <dbReference type="Rhea" id="RHEA-COMP:12693"/>
        <dbReference type="ChEBI" id="CHEBI:15378"/>
        <dbReference type="ChEBI" id="CHEBI:57287"/>
        <dbReference type="ChEBI" id="CHEBI:57288"/>
        <dbReference type="ChEBI" id="CHEBI:133045"/>
        <dbReference type="ChEBI" id="CHEBI:133063"/>
        <dbReference type="EC" id="2.3.1.254"/>
    </reaction>
</comment>
<comment type="catalytic activity">
    <reaction evidence="1">
        <text>N-terminal L-methionyl-L-glutamyl-[protein] + acetyl-CoA = N-terminal N(alpha)-acetyl-L-methionyl-L-glutamyl-[protein] + CoA + H(+)</text>
        <dbReference type="Rhea" id="RHEA:50488"/>
        <dbReference type="Rhea" id="RHEA-COMP:12696"/>
        <dbReference type="Rhea" id="RHEA-COMP:12697"/>
        <dbReference type="ChEBI" id="CHEBI:15378"/>
        <dbReference type="ChEBI" id="CHEBI:57287"/>
        <dbReference type="ChEBI" id="CHEBI:57288"/>
        <dbReference type="ChEBI" id="CHEBI:133359"/>
        <dbReference type="ChEBI" id="CHEBI:133360"/>
        <dbReference type="EC" id="2.3.1.254"/>
    </reaction>
</comment>
<comment type="subunit">
    <text evidence="1">Component of the N-terminal acetyltransferase B (NatB) complex.</text>
</comment>
<comment type="subcellular location">
    <subcellularLocation>
        <location evidence="3">Cytoplasm</location>
    </subcellularLocation>
    <subcellularLocation>
        <location evidence="3">Nucleus</location>
    </subcellularLocation>
</comment>
<comment type="similarity">
    <text evidence="4">Belongs to the acetyltransferase family.</text>
</comment>